<evidence type="ECO:0000255" key="1">
    <source>
        <dbReference type="HAMAP-Rule" id="MF_00258"/>
    </source>
</evidence>
<comment type="function">
    <text evidence="1">Provides the (R)-glutamate required for cell wall biosynthesis.</text>
</comment>
<comment type="catalytic activity">
    <reaction evidence="1">
        <text>L-glutamate = D-glutamate</text>
        <dbReference type="Rhea" id="RHEA:12813"/>
        <dbReference type="ChEBI" id="CHEBI:29985"/>
        <dbReference type="ChEBI" id="CHEBI:29986"/>
        <dbReference type="EC" id="5.1.1.3"/>
    </reaction>
</comment>
<comment type="pathway">
    <text evidence="1">Cell wall biogenesis; peptidoglycan biosynthesis.</text>
</comment>
<comment type="similarity">
    <text evidence="1">Belongs to the aspartate/glutamate racemases family.</text>
</comment>
<name>MURI_STAHA</name>
<protein>
    <recommendedName>
        <fullName evidence="1">Glutamate racemase</fullName>
        <ecNumber evidence="1">5.1.1.3</ecNumber>
    </recommendedName>
</protein>
<organism>
    <name type="scientific">Staphylococcus haemolyticus</name>
    <dbReference type="NCBI Taxonomy" id="1283"/>
    <lineage>
        <taxon>Bacteria</taxon>
        <taxon>Bacillati</taxon>
        <taxon>Bacillota</taxon>
        <taxon>Bacilli</taxon>
        <taxon>Bacillales</taxon>
        <taxon>Staphylococcaceae</taxon>
        <taxon>Staphylococcus</taxon>
    </lineage>
</organism>
<proteinExistence type="inferred from homology"/>
<gene>
    <name evidence="1" type="primary">murI</name>
    <name type="synonym">dga</name>
</gene>
<reference key="1">
    <citation type="journal article" date="1995" name="J. Bacteriol.">
        <title>Staphylococcus haemolyticus contains two D-glutamic acid biosynthetic activities, a glutamate racemase and a D-amino acid transaminase.</title>
        <authorList>
            <person name="Pucci M.J."/>
            <person name="Thanassi J.A."/>
            <person name="Ho H.-T."/>
            <person name="Falk P.J."/>
            <person name="Dougherty T.J."/>
        </authorList>
    </citation>
    <scope>NUCLEOTIDE SEQUENCE [GENOMIC DNA]</scope>
    <source>
        <strain>Y176</strain>
    </source>
</reference>
<dbReference type="EC" id="5.1.1.3" evidence="1"/>
<dbReference type="EMBL" id="U12405">
    <property type="protein sequence ID" value="AAA20474.1"/>
    <property type="molecule type" value="Genomic_DNA"/>
</dbReference>
<dbReference type="SMR" id="P52974"/>
<dbReference type="STRING" id="1283.ShL2_01681"/>
<dbReference type="BioCyc" id="MetaCyc:MONOMER-15462"/>
<dbReference type="UniPathway" id="UPA00219"/>
<dbReference type="GO" id="GO:0008881">
    <property type="term" value="F:glutamate racemase activity"/>
    <property type="evidence" value="ECO:0007669"/>
    <property type="project" value="UniProtKB-UniRule"/>
</dbReference>
<dbReference type="GO" id="GO:0071555">
    <property type="term" value="P:cell wall organization"/>
    <property type="evidence" value="ECO:0007669"/>
    <property type="project" value="UniProtKB-KW"/>
</dbReference>
<dbReference type="GO" id="GO:0009252">
    <property type="term" value="P:peptidoglycan biosynthetic process"/>
    <property type="evidence" value="ECO:0007669"/>
    <property type="project" value="UniProtKB-UniRule"/>
</dbReference>
<dbReference type="GO" id="GO:0008360">
    <property type="term" value="P:regulation of cell shape"/>
    <property type="evidence" value="ECO:0007669"/>
    <property type="project" value="UniProtKB-KW"/>
</dbReference>
<dbReference type="FunFam" id="3.40.50.1860:FF:000002">
    <property type="entry name" value="Glutamate racemase"/>
    <property type="match status" value="1"/>
</dbReference>
<dbReference type="Gene3D" id="3.40.50.1860">
    <property type="match status" value="2"/>
</dbReference>
<dbReference type="HAMAP" id="MF_00258">
    <property type="entry name" value="Glu_racemase"/>
    <property type="match status" value="1"/>
</dbReference>
<dbReference type="InterPro" id="IPR015942">
    <property type="entry name" value="Asp/Glu/hydantoin_racemase"/>
</dbReference>
<dbReference type="InterPro" id="IPR001920">
    <property type="entry name" value="Asp/Glu_race"/>
</dbReference>
<dbReference type="InterPro" id="IPR018187">
    <property type="entry name" value="Asp/Glu_racemase_AS_1"/>
</dbReference>
<dbReference type="InterPro" id="IPR033134">
    <property type="entry name" value="Asp/Glu_racemase_AS_2"/>
</dbReference>
<dbReference type="InterPro" id="IPR004391">
    <property type="entry name" value="Glu_race"/>
</dbReference>
<dbReference type="NCBIfam" id="TIGR00067">
    <property type="entry name" value="glut_race"/>
    <property type="match status" value="1"/>
</dbReference>
<dbReference type="NCBIfam" id="NF002035">
    <property type="entry name" value="PRK00865.1-3"/>
    <property type="match status" value="1"/>
</dbReference>
<dbReference type="PANTHER" id="PTHR21198">
    <property type="entry name" value="GLUTAMATE RACEMASE"/>
    <property type="match status" value="1"/>
</dbReference>
<dbReference type="PANTHER" id="PTHR21198:SF2">
    <property type="entry name" value="GLUTAMATE RACEMASE"/>
    <property type="match status" value="1"/>
</dbReference>
<dbReference type="Pfam" id="PF01177">
    <property type="entry name" value="Asp_Glu_race"/>
    <property type="match status" value="1"/>
</dbReference>
<dbReference type="SUPFAM" id="SSF53681">
    <property type="entry name" value="Aspartate/glutamate racemase"/>
    <property type="match status" value="2"/>
</dbReference>
<dbReference type="PROSITE" id="PS00923">
    <property type="entry name" value="ASP_GLU_RACEMASE_1"/>
    <property type="match status" value="1"/>
</dbReference>
<dbReference type="PROSITE" id="PS00924">
    <property type="entry name" value="ASP_GLU_RACEMASE_2"/>
    <property type="match status" value="1"/>
</dbReference>
<feature type="chain" id="PRO_0000095515" description="Glutamate racemase">
    <location>
        <begin position="1"/>
        <end position="266"/>
    </location>
</feature>
<feature type="active site" description="Proton donor/acceptor" evidence="1">
    <location>
        <position position="72"/>
    </location>
</feature>
<feature type="active site" description="Proton donor/acceptor" evidence="1">
    <location>
        <position position="184"/>
    </location>
</feature>
<feature type="binding site" evidence="1">
    <location>
        <begin position="9"/>
        <end position="10"/>
    </location>
    <ligand>
        <name>substrate</name>
    </ligand>
</feature>
<feature type="binding site" evidence="1">
    <location>
        <begin position="41"/>
        <end position="42"/>
    </location>
    <ligand>
        <name>substrate</name>
    </ligand>
</feature>
<feature type="binding site" evidence="1">
    <location>
        <begin position="73"/>
        <end position="74"/>
    </location>
    <ligand>
        <name>substrate</name>
    </ligand>
</feature>
<feature type="binding site" evidence="1">
    <location>
        <begin position="185"/>
        <end position="186"/>
    </location>
    <ligand>
        <name>substrate</name>
    </ligand>
</feature>
<accession>P52974</accession>
<sequence length="266" mass="29839">MNKPIGVIDSGVGGLTVAKEIMRQLPNETIYYLGDIARCPYGPRPGDEVKQFTTQLANKLMQFDIKMLVIACNTATAVALEHLQQMLPIPVIGVIEPGSRTAIMTTKNQNVLILGTEGTIKSEAYRHHIKHINPNVHVLWCGLPGFVPLVEQMRYDDPTITSIVIHQTLKQWRNTDADTIILGCTHYPLLYKPINDYFGGEKKVISSGLETAREVSALLTFSNEHASYTQHPEHRFFATGDTVHIKNIILQWLKLDVEVERISVDE</sequence>
<keyword id="KW-0133">Cell shape</keyword>
<keyword id="KW-0961">Cell wall biogenesis/degradation</keyword>
<keyword id="KW-0413">Isomerase</keyword>
<keyword id="KW-0573">Peptidoglycan synthesis</keyword>